<gene>
    <name evidence="1" type="primary">gatA</name>
    <name type="ordered locus">CCNA_02519</name>
</gene>
<sequence>MSLTNLTLKAAIDGLAAREFTSVELTRAHIEAIEAARGLNAYILETPDKAIDMAAKSDARRALGEAGPLEGAPLGVKDLFCTNGVRTTACSKILENFVPTYESTVTSQLWRDGAVMLGKLNLDQFAMGSSNETSYFGPVTNPWRAQGSTKALTPGGSSGGSAAAVAADLCLGATATDTGGSIRQPAAFTGTVGIKPTYGRCSRWGVVAFASSLDQAGPIAKTVEDAALLLTSMSGHDPKDSTSLDIPVPDFTQFVGKSVKGLKIGIPKEYRVDNMPAEIEKLWQDGIAWLKEAGCEIVDISLPHTKYALPAYYIVAPAEASSNLARYDGMRYGLREEGANLTEIYENTRASGFGDEVKRRILIGTYVLSAGYYDAYYLKALKVRRRIAEDFDNAWTQCDAILTPTAPSAAFGLGENSNDPIAMYLNDVFTVTTNLAGLPGLSLPAGLDANGLPLGLQIIGKPLDEATVFSVAGAVEKAAGFTAKAEKWW</sequence>
<organism>
    <name type="scientific">Caulobacter vibrioides (strain NA1000 / CB15N)</name>
    <name type="common">Caulobacter crescentus</name>
    <dbReference type="NCBI Taxonomy" id="565050"/>
    <lineage>
        <taxon>Bacteria</taxon>
        <taxon>Pseudomonadati</taxon>
        <taxon>Pseudomonadota</taxon>
        <taxon>Alphaproteobacteria</taxon>
        <taxon>Caulobacterales</taxon>
        <taxon>Caulobacteraceae</taxon>
        <taxon>Caulobacter</taxon>
    </lineage>
</organism>
<proteinExistence type="inferred from homology"/>
<reference key="1">
    <citation type="journal article" date="2010" name="J. Bacteriol.">
        <title>The genetic basis of laboratory adaptation in Caulobacter crescentus.</title>
        <authorList>
            <person name="Marks M.E."/>
            <person name="Castro-Rojas C.M."/>
            <person name="Teiling C."/>
            <person name="Du L."/>
            <person name="Kapatral V."/>
            <person name="Walunas T.L."/>
            <person name="Crosson S."/>
        </authorList>
    </citation>
    <scope>NUCLEOTIDE SEQUENCE [LARGE SCALE GENOMIC DNA]</scope>
    <source>
        <strain>NA1000 / CB15N</strain>
    </source>
</reference>
<evidence type="ECO:0000255" key="1">
    <source>
        <dbReference type="HAMAP-Rule" id="MF_00120"/>
    </source>
</evidence>
<dbReference type="EC" id="6.3.5.7" evidence="1"/>
<dbReference type="EMBL" id="CP001340">
    <property type="protein sequence ID" value="ACL95984.1"/>
    <property type="molecule type" value="Genomic_DNA"/>
</dbReference>
<dbReference type="RefSeq" id="WP_010920295.1">
    <property type="nucleotide sequence ID" value="NC_011916.1"/>
</dbReference>
<dbReference type="RefSeq" id="YP_002517892.1">
    <property type="nucleotide sequence ID" value="NC_011916.1"/>
</dbReference>
<dbReference type="SMR" id="B8GZJ5"/>
<dbReference type="GeneID" id="7330672"/>
<dbReference type="KEGG" id="ccs:CCNA_02519"/>
<dbReference type="PATRIC" id="fig|565050.3.peg.2472"/>
<dbReference type="HOGENOM" id="CLU_009600_0_3_5"/>
<dbReference type="OrthoDB" id="9811471at2"/>
<dbReference type="PhylomeDB" id="B8GZJ5"/>
<dbReference type="Proteomes" id="UP000001364">
    <property type="component" value="Chromosome"/>
</dbReference>
<dbReference type="GO" id="GO:0030956">
    <property type="term" value="C:glutamyl-tRNA(Gln) amidotransferase complex"/>
    <property type="evidence" value="ECO:0007669"/>
    <property type="project" value="InterPro"/>
</dbReference>
<dbReference type="GO" id="GO:0005524">
    <property type="term" value="F:ATP binding"/>
    <property type="evidence" value="ECO:0007669"/>
    <property type="project" value="UniProtKB-KW"/>
</dbReference>
<dbReference type="GO" id="GO:0050567">
    <property type="term" value="F:glutaminyl-tRNA synthase (glutamine-hydrolyzing) activity"/>
    <property type="evidence" value="ECO:0007669"/>
    <property type="project" value="UniProtKB-UniRule"/>
</dbReference>
<dbReference type="GO" id="GO:0006412">
    <property type="term" value="P:translation"/>
    <property type="evidence" value="ECO:0007669"/>
    <property type="project" value="UniProtKB-UniRule"/>
</dbReference>
<dbReference type="Gene3D" id="3.90.1300.10">
    <property type="entry name" value="Amidase signature (AS) domain"/>
    <property type="match status" value="1"/>
</dbReference>
<dbReference type="HAMAP" id="MF_00120">
    <property type="entry name" value="GatA"/>
    <property type="match status" value="1"/>
</dbReference>
<dbReference type="InterPro" id="IPR000120">
    <property type="entry name" value="Amidase"/>
</dbReference>
<dbReference type="InterPro" id="IPR020556">
    <property type="entry name" value="Amidase_CS"/>
</dbReference>
<dbReference type="InterPro" id="IPR023631">
    <property type="entry name" value="Amidase_dom"/>
</dbReference>
<dbReference type="InterPro" id="IPR036928">
    <property type="entry name" value="AS_sf"/>
</dbReference>
<dbReference type="InterPro" id="IPR004412">
    <property type="entry name" value="GatA"/>
</dbReference>
<dbReference type="NCBIfam" id="TIGR00132">
    <property type="entry name" value="gatA"/>
    <property type="match status" value="1"/>
</dbReference>
<dbReference type="PANTHER" id="PTHR11895:SF151">
    <property type="entry name" value="GLUTAMYL-TRNA(GLN) AMIDOTRANSFERASE SUBUNIT A"/>
    <property type="match status" value="1"/>
</dbReference>
<dbReference type="PANTHER" id="PTHR11895">
    <property type="entry name" value="TRANSAMIDASE"/>
    <property type="match status" value="1"/>
</dbReference>
<dbReference type="Pfam" id="PF01425">
    <property type="entry name" value="Amidase"/>
    <property type="match status" value="1"/>
</dbReference>
<dbReference type="SUPFAM" id="SSF75304">
    <property type="entry name" value="Amidase signature (AS) enzymes"/>
    <property type="match status" value="1"/>
</dbReference>
<dbReference type="PROSITE" id="PS00571">
    <property type="entry name" value="AMIDASES"/>
    <property type="match status" value="1"/>
</dbReference>
<protein>
    <recommendedName>
        <fullName evidence="1">Glutamyl-tRNA(Gln) amidotransferase subunit A</fullName>
        <shortName evidence="1">Glu-ADT subunit A</shortName>
        <ecNumber evidence="1">6.3.5.7</ecNumber>
    </recommendedName>
</protein>
<keyword id="KW-0067">ATP-binding</keyword>
<keyword id="KW-0436">Ligase</keyword>
<keyword id="KW-0547">Nucleotide-binding</keyword>
<keyword id="KW-0648">Protein biosynthesis</keyword>
<keyword id="KW-1185">Reference proteome</keyword>
<name>GATA_CAUVN</name>
<accession>B8GZJ5</accession>
<comment type="function">
    <text evidence="1">Allows the formation of correctly charged Gln-tRNA(Gln) through the transamidation of misacylated Glu-tRNA(Gln) in organisms which lack glutaminyl-tRNA synthetase. The reaction takes place in the presence of glutamine and ATP through an activated gamma-phospho-Glu-tRNA(Gln).</text>
</comment>
<comment type="catalytic activity">
    <reaction evidence="1">
        <text>L-glutamyl-tRNA(Gln) + L-glutamine + ATP + H2O = L-glutaminyl-tRNA(Gln) + L-glutamate + ADP + phosphate + H(+)</text>
        <dbReference type="Rhea" id="RHEA:17521"/>
        <dbReference type="Rhea" id="RHEA-COMP:9681"/>
        <dbReference type="Rhea" id="RHEA-COMP:9684"/>
        <dbReference type="ChEBI" id="CHEBI:15377"/>
        <dbReference type="ChEBI" id="CHEBI:15378"/>
        <dbReference type="ChEBI" id="CHEBI:29985"/>
        <dbReference type="ChEBI" id="CHEBI:30616"/>
        <dbReference type="ChEBI" id="CHEBI:43474"/>
        <dbReference type="ChEBI" id="CHEBI:58359"/>
        <dbReference type="ChEBI" id="CHEBI:78520"/>
        <dbReference type="ChEBI" id="CHEBI:78521"/>
        <dbReference type="ChEBI" id="CHEBI:456216"/>
        <dbReference type="EC" id="6.3.5.7"/>
    </reaction>
</comment>
<comment type="subunit">
    <text evidence="1">Heterotrimer of A, B and C subunits.</text>
</comment>
<comment type="similarity">
    <text evidence="1">Belongs to the amidase family. GatA subfamily.</text>
</comment>
<feature type="chain" id="PRO_1000122471" description="Glutamyl-tRNA(Gln) amidotransferase subunit A">
    <location>
        <begin position="1"/>
        <end position="489"/>
    </location>
</feature>
<feature type="active site" description="Charge relay system" evidence="1">
    <location>
        <position position="77"/>
    </location>
</feature>
<feature type="active site" description="Charge relay system" evidence="1">
    <location>
        <position position="157"/>
    </location>
</feature>
<feature type="active site" description="Acyl-ester intermediate" evidence="1">
    <location>
        <position position="181"/>
    </location>
</feature>